<protein>
    <recommendedName>
        <fullName evidence="1">Large ribosomal subunit protein bL34</fullName>
    </recommendedName>
    <alternativeName>
        <fullName evidence="2">50S ribosomal protein L34</fullName>
    </alternativeName>
</protein>
<accession>Q0SAG8</accession>
<gene>
    <name evidence="1" type="primary">rpmH</name>
    <name type="ordered locus">RHA1_ro03665</name>
</gene>
<dbReference type="EMBL" id="CP000431">
    <property type="protein sequence ID" value="ABG95468.1"/>
    <property type="molecule type" value="Genomic_DNA"/>
</dbReference>
<dbReference type="RefSeq" id="WP_005263481.1">
    <property type="nucleotide sequence ID" value="NC_008268.1"/>
</dbReference>
<dbReference type="SMR" id="Q0SAG8"/>
<dbReference type="GeneID" id="69895475"/>
<dbReference type="KEGG" id="rha:RHA1_ro03665"/>
<dbReference type="eggNOG" id="COG0230">
    <property type="taxonomic scope" value="Bacteria"/>
</dbReference>
<dbReference type="HOGENOM" id="CLU_129938_2_1_11"/>
<dbReference type="OrthoDB" id="9804832at2"/>
<dbReference type="Proteomes" id="UP000008710">
    <property type="component" value="Chromosome"/>
</dbReference>
<dbReference type="GO" id="GO:1990904">
    <property type="term" value="C:ribonucleoprotein complex"/>
    <property type="evidence" value="ECO:0007669"/>
    <property type="project" value="UniProtKB-KW"/>
</dbReference>
<dbReference type="GO" id="GO:0005840">
    <property type="term" value="C:ribosome"/>
    <property type="evidence" value="ECO:0007669"/>
    <property type="project" value="UniProtKB-KW"/>
</dbReference>
<dbReference type="GO" id="GO:0003735">
    <property type="term" value="F:structural constituent of ribosome"/>
    <property type="evidence" value="ECO:0007669"/>
    <property type="project" value="InterPro"/>
</dbReference>
<dbReference type="GO" id="GO:0006412">
    <property type="term" value="P:translation"/>
    <property type="evidence" value="ECO:0007669"/>
    <property type="project" value="UniProtKB-UniRule"/>
</dbReference>
<dbReference type="FunFam" id="1.10.287.3980:FF:000001">
    <property type="entry name" value="Mitochondrial ribosomal protein L34"/>
    <property type="match status" value="1"/>
</dbReference>
<dbReference type="Gene3D" id="1.10.287.3980">
    <property type="match status" value="1"/>
</dbReference>
<dbReference type="HAMAP" id="MF_00391">
    <property type="entry name" value="Ribosomal_bL34"/>
    <property type="match status" value="1"/>
</dbReference>
<dbReference type="InterPro" id="IPR000271">
    <property type="entry name" value="Ribosomal_bL34"/>
</dbReference>
<dbReference type="InterPro" id="IPR020939">
    <property type="entry name" value="Ribosomal_bL34_CS"/>
</dbReference>
<dbReference type="NCBIfam" id="TIGR01030">
    <property type="entry name" value="rpmH_bact"/>
    <property type="match status" value="1"/>
</dbReference>
<dbReference type="PANTHER" id="PTHR14503:SF4">
    <property type="entry name" value="LARGE RIBOSOMAL SUBUNIT PROTEIN BL34M"/>
    <property type="match status" value="1"/>
</dbReference>
<dbReference type="PANTHER" id="PTHR14503">
    <property type="entry name" value="MITOCHONDRIAL RIBOSOMAL PROTEIN 34 FAMILY MEMBER"/>
    <property type="match status" value="1"/>
</dbReference>
<dbReference type="Pfam" id="PF00468">
    <property type="entry name" value="Ribosomal_L34"/>
    <property type="match status" value="1"/>
</dbReference>
<dbReference type="PROSITE" id="PS00784">
    <property type="entry name" value="RIBOSOMAL_L34"/>
    <property type="match status" value="1"/>
</dbReference>
<name>RL34_RHOJR</name>
<sequence length="47" mass="5536">MAKGKRTFQPNNRRRARVHGFRLRMRTRAGRAIVSARRRKGRESLTA</sequence>
<keyword id="KW-0687">Ribonucleoprotein</keyword>
<keyword id="KW-0689">Ribosomal protein</keyword>
<comment type="similarity">
    <text evidence="1">Belongs to the bacterial ribosomal protein bL34 family.</text>
</comment>
<feature type="chain" id="PRO_1000013428" description="Large ribosomal subunit protein bL34">
    <location>
        <begin position="1"/>
        <end position="47"/>
    </location>
</feature>
<proteinExistence type="inferred from homology"/>
<evidence type="ECO:0000255" key="1">
    <source>
        <dbReference type="HAMAP-Rule" id="MF_00391"/>
    </source>
</evidence>
<evidence type="ECO:0000305" key="2"/>
<organism>
    <name type="scientific">Rhodococcus jostii (strain RHA1)</name>
    <dbReference type="NCBI Taxonomy" id="101510"/>
    <lineage>
        <taxon>Bacteria</taxon>
        <taxon>Bacillati</taxon>
        <taxon>Actinomycetota</taxon>
        <taxon>Actinomycetes</taxon>
        <taxon>Mycobacteriales</taxon>
        <taxon>Nocardiaceae</taxon>
        <taxon>Rhodococcus</taxon>
    </lineage>
</organism>
<reference key="1">
    <citation type="journal article" date="2006" name="Proc. Natl. Acad. Sci. U.S.A.">
        <title>The complete genome of Rhodococcus sp. RHA1 provides insights into a catabolic powerhouse.</title>
        <authorList>
            <person name="McLeod M.P."/>
            <person name="Warren R.L."/>
            <person name="Hsiao W.W.L."/>
            <person name="Araki N."/>
            <person name="Myhre M."/>
            <person name="Fernandes C."/>
            <person name="Miyazawa D."/>
            <person name="Wong W."/>
            <person name="Lillquist A.L."/>
            <person name="Wang D."/>
            <person name="Dosanjh M."/>
            <person name="Hara H."/>
            <person name="Petrescu A."/>
            <person name="Morin R.D."/>
            <person name="Yang G."/>
            <person name="Stott J.M."/>
            <person name="Schein J.E."/>
            <person name="Shin H."/>
            <person name="Smailus D."/>
            <person name="Siddiqui A.S."/>
            <person name="Marra M.A."/>
            <person name="Jones S.J.M."/>
            <person name="Holt R."/>
            <person name="Brinkman F.S.L."/>
            <person name="Miyauchi K."/>
            <person name="Fukuda M."/>
            <person name="Davies J.E."/>
            <person name="Mohn W.W."/>
            <person name="Eltis L.D."/>
        </authorList>
    </citation>
    <scope>NUCLEOTIDE SEQUENCE [LARGE SCALE GENOMIC DNA]</scope>
    <source>
        <strain>RHA1</strain>
    </source>
</reference>